<dbReference type="EC" id="5.4.99.12" evidence="1"/>
<dbReference type="EMBL" id="CP000931">
    <property type="protein sequence ID" value="ABZ77196.1"/>
    <property type="molecule type" value="Genomic_DNA"/>
</dbReference>
<dbReference type="RefSeq" id="WP_012277724.1">
    <property type="nucleotide sequence ID" value="NC_010334.1"/>
</dbReference>
<dbReference type="SMR" id="B0TKZ4"/>
<dbReference type="STRING" id="458817.Shal_2641"/>
<dbReference type="KEGG" id="shl:Shal_2641"/>
<dbReference type="eggNOG" id="COG0101">
    <property type="taxonomic scope" value="Bacteria"/>
</dbReference>
<dbReference type="HOGENOM" id="CLU_014673_0_2_6"/>
<dbReference type="OrthoDB" id="9811823at2"/>
<dbReference type="Proteomes" id="UP000001317">
    <property type="component" value="Chromosome"/>
</dbReference>
<dbReference type="GO" id="GO:0003723">
    <property type="term" value="F:RNA binding"/>
    <property type="evidence" value="ECO:0007669"/>
    <property type="project" value="InterPro"/>
</dbReference>
<dbReference type="GO" id="GO:0160147">
    <property type="term" value="F:tRNA pseudouridine(38-40) synthase activity"/>
    <property type="evidence" value="ECO:0007669"/>
    <property type="project" value="UniProtKB-EC"/>
</dbReference>
<dbReference type="GO" id="GO:0031119">
    <property type="term" value="P:tRNA pseudouridine synthesis"/>
    <property type="evidence" value="ECO:0007669"/>
    <property type="project" value="UniProtKB-UniRule"/>
</dbReference>
<dbReference type="CDD" id="cd02570">
    <property type="entry name" value="PseudoU_synth_EcTruA"/>
    <property type="match status" value="1"/>
</dbReference>
<dbReference type="FunFam" id="3.30.70.580:FF:000001">
    <property type="entry name" value="tRNA pseudouridine synthase A"/>
    <property type="match status" value="1"/>
</dbReference>
<dbReference type="FunFam" id="3.30.70.660:FF:000001">
    <property type="entry name" value="tRNA pseudouridine synthase A"/>
    <property type="match status" value="1"/>
</dbReference>
<dbReference type="Gene3D" id="3.30.70.660">
    <property type="entry name" value="Pseudouridine synthase I, catalytic domain, C-terminal subdomain"/>
    <property type="match status" value="1"/>
</dbReference>
<dbReference type="Gene3D" id="3.30.70.580">
    <property type="entry name" value="Pseudouridine synthase I, catalytic domain, N-terminal subdomain"/>
    <property type="match status" value="1"/>
</dbReference>
<dbReference type="HAMAP" id="MF_00171">
    <property type="entry name" value="TruA"/>
    <property type="match status" value="1"/>
</dbReference>
<dbReference type="InterPro" id="IPR020103">
    <property type="entry name" value="PsdUridine_synth_cat_dom_sf"/>
</dbReference>
<dbReference type="InterPro" id="IPR001406">
    <property type="entry name" value="PsdUridine_synth_TruA"/>
</dbReference>
<dbReference type="InterPro" id="IPR020097">
    <property type="entry name" value="PsdUridine_synth_TruA_a/b_dom"/>
</dbReference>
<dbReference type="InterPro" id="IPR020095">
    <property type="entry name" value="PsdUridine_synth_TruA_C"/>
</dbReference>
<dbReference type="InterPro" id="IPR020094">
    <property type="entry name" value="TruA/RsuA/RluB/E/F_N"/>
</dbReference>
<dbReference type="NCBIfam" id="TIGR00071">
    <property type="entry name" value="hisT_truA"/>
    <property type="match status" value="1"/>
</dbReference>
<dbReference type="PANTHER" id="PTHR11142">
    <property type="entry name" value="PSEUDOURIDYLATE SYNTHASE"/>
    <property type="match status" value="1"/>
</dbReference>
<dbReference type="PANTHER" id="PTHR11142:SF0">
    <property type="entry name" value="TRNA PSEUDOURIDINE SYNTHASE-LIKE 1"/>
    <property type="match status" value="1"/>
</dbReference>
<dbReference type="Pfam" id="PF01416">
    <property type="entry name" value="PseudoU_synth_1"/>
    <property type="match status" value="2"/>
</dbReference>
<dbReference type="PIRSF" id="PIRSF001430">
    <property type="entry name" value="tRNA_psdUrid_synth"/>
    <property type="match status" value="1"/>
</dbReference>
<dbReference type="SUPFAM" id="SSF55120">
    <property type="entry name" value="Pseudouridine synthase"/>
    <property type="match status" value="1"/>
</dbReference>
<keyword id="KW-0413">Isomerase</keyword>
<keyword id="KW-0819">tRNA processing</keyword>
<feature type="chain" id="PRO_1000077102" description="tRNA pseudouridine synthase A">
    <location>
        <begin position="1"/>
        <end position="261"/>
    </location>
</feature>
<feature type="active site" description="Nucleophile" evidence="1">
    <location>
        <position position="51"/>
    </location>
</feature>
<feature type="binding site" evidence="1">
    <location>
        <position position="109"/>
    </location>
    <ligand>
        <name>substrate</name>
    </ligand>
</feature>
<sequence length="261" mass="29402">MRVALGIEYDGSQYFGWQRQAEVDTVQERLEKALSIVANEPIAVQCAGRTDAGVHATGQVVHFETNAVRKDTAWTLGVNVNLPDNIAVRWVKVVDDEFHARFTATARRYRYMIYNHQLRPGILRSGVSHYPGVIDEAKMHQAAQYLLGEQDFTSFRAVQCQSNTPFRCVHEVNVSRQGMYICVDIKANAFLHHMVRNIVGSLLEVGLGNQPIEWIEQLLALKDRNKAAATAKPNGLYLVDVTYPESYQLPKLSLGPLFMLD</sequence>
<comment type="function">
    <text evidence="1">Formation of pseudouridine at positions 38, 39 and 40 in the anticodon stem and loop of transfer RNAs.</text>
</comment>
<comment type="catalytic activity">
    <reaction evidence="1">
        <text>uridine(38/39/40) in tRNA = pseudouridine(38/39/40) in tRNA</text>
        <dbReference type="Rhea" id="RHEA:22376"/>
        <dbReference type="Rhea" id="RHEA-COMP:10085"/>
        <dbReference type="Rhea" id="RHEA-COMP:10087"/>
        <dbReference type="ChEBI" id="CHEBI:65314"/>
        <dbReference type="ChEBI" id="CHEBI:65315"/>
        <dbReference type="EC" id="5.4.99.12"/>
    </reaction>
</comment>
<comment type="subunit">
    <text evidence="1">Homodimer.</text>
</comment>
<comment type="similarity">
    <text evidence="1">Belongs to the tRNA pseudouridine synthase TruA family.</text>
</comment>
<protein>
    <recommendedName>
        <fullName evidence="1">tRNA pseudouridine synthase A</fullName>
        <ecNumber evidence="1">5.4.99.12</ecNumber>
    </recommendedName>
    <alternativeName>
        <fullName evidence="1">tRNA pseudouridine(38-40) synthase</fullName>
    </alternativeName>
    <alternativeName>
        <fullName evidence="1">tRNA pseudouridylate synthase I</fullName>
    </alternativeName>
    <alternativeName>
        <fullName evidence="1">tRNA-uridine isomerase I</fullName>
    </alternativeName>
</protein>
<gene>
    <name evidence="1" type="primary">truA</name>
    <name type="ordered locus">Shal_2641</name>
</gene>
<evidence type="ECO:0000255" key="1">
    <source>
        <dbReference type="HAMAP-Rule" id="MF_00171"/>
    </source>
</evidence>
<proteinExistence type="inferred from homology"/>
<name>TRUA_SHEHH</name>
<reference key="1">
    <citation type="submission" date="2008-01" db="EMBL/GenBank/DDBJ databases">
        <title>Complete sequence of Shewanella halifaxensis HAW-EB4.</title>
        <authorList>
            <consortium name="US DOE Joint Genome Institute"/>
            <person name="Copeland A."/>
            <person name="Lucas S."/>
            <person name="Lapidus A."/>
            <person name="Glavina del Rio T."/>
            <person name="Dalin E."/>
            <person name="Tice H."/>
            <person name="Bruce D."/>
            <person name="Goodwin L."/>
            <person name="Pitluck S."/>
            <person name="Sims D."/>
            <person name="Brettin T."/>
            <person name="Detter J.C."/>
            <person name="Han C."/>
            <person name="Kuske C.R."/>
            <person name="Schmutz J."/>
            <person name="Larimer F."/>
            <person name="Land M."/>
            <person name="Hauser L."/>
            <person name="Kyrpides N."/>
            <person name="Kim E."/>
            <person name="Zhao J.-S."/>
            <person name="Richardson P."/>
        </authorList>
    </citation>
    <scope>NUCLEOTIDE SEQUENCE [LARGE SCALE GENOMIC DNA]</scope>
    <source>
        <strain>HAW-EB4</strain>
    </source>
</reference>
<organism>
    <name type="scientific">Shewanella halifaxensis (strain HAW-EB4)</name>
    <dbReference type="NCBI Taxonomy" id="458817"/>
    <lineage>
        <taxon>Bacteria</taxon>
        <taxon>Pseudomonadati</taxon>
        <taxon>Pseudomonadota</taxon>
        <taxon>Gammaproteobacteria</taxon>
        <taxon>Alteromonadales</taxon>
        <taxon>Shewanellaceae</taxon>
        <taxon>Shewanella</taxon>
    </lineage>
</organism>
<accession>B0TKZ4</accession>